<organism>
    <name type="scientific">Homo sapiens</name>
    <name type="common">Human</name>
    <dbReference type="NCBI Taxonomy" id="9606"/>
    <lineage>
        <taxon>Eukaryota</taxon>
        <taxon>Metazoa</taxon>
        <taxon>Chordata</taxon>
        <taxon>Craniata</taxon>
        <taxon>Vertebrata</taxon>
        <taxon>Euteleostomi</taxon>
        <taxon>Mammalia</taxon>
        <taxon>Eutheria</taxon>
        <taxon>Euarchontoglires</taxon>
        <taxon>Primates</taxon>
        <taxon>Haplorrhini</taxon>
        <taxon>Catarrhini</taxon>
        <taxon>Hominidae</taxon>
        <taxon>Homo</taxon>
    </lineage>
</organism>
<proteinExistence type="evidence at protein level"/>
<protein>
    <recommendedName>
        <fullName>HAUS augmin-like complex subunit 8</fullName>
    </recommendedName>
    <alternativeName>
        <fullName>HEC1/NDC80-interacting centrosome-associated protein 1</fullName>
    </alternativeName>
    <alternativeName>
        <fullName>Sarcoma antigen NY-SAR-48</fullName>
    </alternativeName>
</protein>
<feature type="initiator methionine" description="Removed" evidence="11">
    <location>
        <position position="1"/>
    </location>
</feature>
<feature type="chain" id="PRO_0000319937" description="HAUS augmin-like complex subunit 8">
    <location>
        <begin position="2"/>
        <end position="410"/>
    </location>
</feature>
<feature type="region of interest" description="Disordered" evidence="2">
    <location>
        <begin position="1"/>
        <end position="104"/>
    </location>
</feature>
<feature type="region of interest" description="Disordered" evidence="2">
    <location>
        <begin position="118"/>
        <end position="143"/>
    </location>
</feature>
<feature type="region of interest" description="Disordered" evidence="2">
    <location>
        <begin position="353"/>
        <end position="410"/>
    </location>
</feature>
<feature type="coiled-coil region" evidence="1">
    <location>
        <begin position="156"/>
        <end position="208"/>
    </location>
</feature>
<feature type="compositionally biased region" description="Polar residues" evidence="2">
    <location>
        <begin position="373"/>
        <end position="384"/>
    </location>
</feature>
<feature type="compositionally biased region" description="Low complexity" evidence="2">
    <location>
        <begin position="385"/>
        <end position="394"/>
    </location>
</feature>
<feature type="modified residue" description="N-acetylalanine" evidence="11">
    <location>
        <position position="2"/>
    </location>
</feature>
<feature type="modified residue" description="Phosphoserine" evidence="10">
    <location>
        <position position="105"/>
    </location>
</feature>
<feature type="splice variant" id="VSP_031543" description="In isoform 2." evidence="8">
    <location>
        <begin position="1"/>
        <end position="61"/>
    </location>
</feature>
<feature type="splice variant" id="VSP_047167" description="In isoform 3." evidence="8">
    <location>
        <position position="77"/>
    </location>
</feature>
<feature type="sequence variant" id="VAR_039056" description="In dbSNP:rs1130222." evidence="3 4">
    <original>G</original>
    <variation>R</variation>
    <location>
        <position position="83"/>
    </location>
</feature>
<feature type="sequence conflict" description="In Ref. 6; AAH04398." evidence="8" ref="6">
    <original>R</original>
    <variation>P</variation>
    <location>
        <position position="38"/>
    </location>
</feature>
<feature type="sequence conflict" description="In Ref. 1; no nucleotide entry." evidence="8" ref="1">
    <original>Q</original>
    <variation>QLQ</variation>
    <location>
        <position position="88"/>
    </location>
</feature>
<feature type="sequence conflict" description="In Ref. 5; AAO65172." evidence="8" ref="5">
    <original>E</original>
    <variation>D</variation>
    <location>
        <position position="268"/>
    </location>
</feature>
<feature type="sequence conflict" description="In Ref. 1; no nucleotide entry." evidence="8" ref="1">
    <original>T</original>
    <variation>I</variation>
    <location>
        <position position="272"/>
    </location>
</feature>
<feature type="sequence conflict" description="In Ref. 5; AAO65172." evidence="8" ref="5">
    <original>T</original>
    <variation>L</variation>
    <location>
        <position position="272"/>
    </location>
</feature>
<feature type="sequence conflict" description="In Ref. 1; no nucleotide entry." evidence="8" ref="1">
    <original>L</original>
    <variation>F</variation>
    <location>
        <position position="275"/>
    </location>
</feature>
<feature type="sequence conflict" description="In Ref. 1; no nucleotide entry." evidence="8" ref="1">
    <location>
        <begin position="354"/>
        <end position="355"/>
    </location>
</feature>
<name>HAUS8_HUMAN</name>
<comment type="function">
    <text evidence="4 5 6">Contributes to mitotic spindle assembly, maintenance of centrosome integrity and completion of cytokinesis as part of the HAUS augmin-like complex.</text>
</comment>
<comment type="subunit">
    <text evidence="5 6 7">Component of the HAUS augmin-like complex. The complex interacts with the gamma-tubulin ring complex and this interaction is required for spindle assembly. Associates with microtubules. The interaction with microtubules is strong during mitosis, while it is weak or absent during interphase. It is unclear whether this interaction is direct or indirect. Interacts with EML3 (phosphorylated at 'Thr-881') and TUBG1 (PubMed:30723163).</text>
</comment>
<comment type="interaction">
    <interactant intactId="EBI-2558143">
        <id>Q9BT25</id>
    </interactant>
    <interactant intactId="EBI-747505">
        <id>Q8TAB5</id>
        <label>C1orf216</label>
    </interactant>
    <organismsDiffer>false</organismsDiffer>
    <experiments>3</experiments>
</comment>
<comment type="interaction">
    <interactant intactId="EBI-2558143">
        <id>Q9BT25</id>
    </interactant>
    <interactant intactId="EBI-718729">
        <id>P55212</id>
        <label>CASP6</label>
    </interactant>
    <organismsDiffer>false</organismsDiffer>
    <experiments>3</experiments>
</comment>
<comment type="interaction">
    <interactant intactId="EBI-2558143">
        <id>Q9BT25</id>
    </interactant>
    <interactant intactId="EBI-10175300">
        <id>Q8TD31-3</id>
        <label>CCHCR1</label>
    </interactant>
    <organismsDiffer>false</organismsDiffer>
    <experiments>5</experiments>
</comment>
<comment type="interaction">
    <interactant intactId="EBI-2558143">
        <id>Q9BT25</id>
    </interactant>
    <interactant intactId="EBI-748597">
        <id>Q05D60</id>
        <label>DEUP1</label>
    </interactant>
    <organismsDiffer>false</organismsDiffer>
    <experiments>3</experiments>
</comment>
<comment type="interaction">
    <interactant intactId="EBI-2558143">
        <id>Q9BT25</id>
    </interactant>
    <interactant intactId="EBI-348399">
        <id>P22607</id>
        <label>FGFR3</label>
    </interactant>
    <organismsDiffer>false</organismsDiffer>
    <experiments>3</experiments>
</comment>
<comment type="interaction">
    <interactant intactId="EBI-2558143">
        <id>Q9BT25</id>
    </interactant>
    <interactant intactId="EBI-8285963">
        <id>Q14957</id>
        <label>GRIN2C</label>
    </interactant>
    <organismsDiffer>false</organismsDiffer>
    <experiments>3</experiments>
</comment>
<comment type="interaction">
    <interactant intactId="EBI-2558143">
        <id>Q9BT25</id>
    </interactant>
    <interactant intactId="EBI-2558196">
        <id>Q7Z4H7</id>
        <label>HAUS6</label>
    </interactant>
    <organismsDiffer>false</organismsDiffer>
    <experiments>9</experiments>
</comment>
<comment type="interaction">
    <interactant intactId="EBI-2558143">
        <id>Q9BT25</id>
    </interactant>
    <interactant intactId="EBI-350145">
        <id>P01112</id>
        <label>HRAS</label>
    </interactant>
    <organismsDiffer>false</organismsDiffer>
    <experiments>3</experiments>
</comment>
<comment type="interaction">
    <interactant intactId="EBI-2558143">
        <id>Q9BT25</id>
    </interactant>
    <interactant intactId="EBI-21591415">
        <id>P13473-2</id>
        <label>LAMP2</label>
    </interactant>
    <organismsDiffer>false</organismsDiffer>
    <experiments>3</experiments>
</comment>
<comment type="interaction">
    <interactant intactId="EBI-2558143">
        <id>Q9BT25</id>
    </interactant>
    <interactant intactId="EBI-744782">
        <id>Q9Y5B8</id>
        <label>NME7</label>
    </interactant>
    <organismsDiffer>false</organismsDiffer>
    <experiments>3</experiments>
</comment>
<comment type="interaction">
    <interactant intactId="EBI-2558143">
        <id>Q9BT25</id>
    </interactant>
    <interactant intactId="EBI-1042642">
        <id>Q9H7Z3</id>
        <label>NRDE2</label>
    </interactant>
    <organismsDiffer>false</organismsDiffer>
    <experiments>3</experiments>
</comment>
<comment type="interaction">
    <interactant intactId="EBI-2558143">
        <id>Q9BT25</id>
    </interactant>
    <interactant intactId="EBI-741158">
        <id>Q96HA8</id>
        <label>NTAQ1</label>
    </interactant>
    <organismsDiffer>false</organismsDiffer>
    <experiments>3</experiments>
</comment>
<comment type="interaction">
    <interactant intactId="EBI-2558143">
        <id>Q9BT25</id>
    </interactant>
    <interactant intactId="EBI-741048">
        <id>Q7Z3B4</id>
        <label>NUP54</label>
    </interactant>
    <organismsDiffer>false</organismsDiffer>
    <experiments>3</experiments>
</comment>
<comment type="interaction">
    <interactant intactId="EBI-2558143">
        <id>Q9BT25</id>
    </interactant>
    <interactant intactId="EBI-286642">
        <id>P62826</id>
        <label>RAN</label>
    </interactant>
    <organismsDiffer>false</organismsDiffer>
    <experiments>3</experiments>
</comment>
<comment type="interaction">
    <interactant intactId="EBI-2558143">
        <id>Q9BT25</id>
    </interactant>
    <interactant intactId="EBI-2932492">
        <id>Q99757</id>
        <label>TXN2</label>
    </interactant>
    <organismsDiffer>false</organismsDiffer>
    <experiments>3</experiments>
</comment>
<comment type="interaction">
    <interactant intactId="EBI-2558143">
        <id>Q9BT25</id>
    </interactant>
    <interactant intactId="EBI-739895">
        <id>Q8N6Y0</id>
        <label>USHBP1</label>
    </interactant>
    <organismsDiffer>false</organismsDiffer>
    <experiments>3</experiments>
</comment>
<comment type="interaction">
    <interactant intactId="EBI-2558143">
        <id>Q9BT25</id>
    </interactant>
    <interactant intactId="EBI-953824">
        <id>Q96DA0</id>
        <label>ZG16B</label>
    </interactant>
    <organismsDiffer>false</organismsDiffer>
    <experiments>3</experiments>
</comment>
<comment type="interaction">
    <interactant intactId="EBI-2558143">
        <id>Q9BT25</id>
    </interactant>
    <interactant intactId="EBI-25900580">
        <id>Q9Y649</id>
    </interactant>
    <organismsDiffer>false</organismsDiffer>
    <experiments>3</experiments>
</comment>
<comment type="subcellular location">
    <subcellularLocation>
        <location evidence="8">Cytoplasm</location>
    </subcellularLocation>
    <subcellularLocation>
        <location evidence="5 6">Cytoplasm</location>
        <location evidence="5 6">Cytoskeleton</location>
        <location evidence="5 6">Microtubule organizing center</location>
        <location evidence="5 6">Centrosome</location>
    </subcellularLocation>
    <subcellularLocation>
        <location evidence="5 6 7">Cytoplasm</location>
        <location evidence="5 6 7">Cytoskeleton</location>
        <location evidence="5 6 7">Spindle</location>
    </subcellularLocation>
    <subcellularLocation>
        <location evidence="9">Cytoplasm</location>
        <location evidence="9">Cytoskeleton</location>
        <location evidence="9">Spindle pole</location>
    </subcellularLocation>
    <text evidence="5 6 7">During interphase, primarily cytoplasmic and associates with centrosomes and with the mitotic spindles, preferentially at the spindle pole vicinity. During anaphase and telophase, additionally associates with the spindle midzone and midbody, respectively. Localizes to mitotic spindle microtubules.</text>
</comment>
<comment type="alternative products">
    <event type="alternative splicing"/>
    <isoform>
        <id>Q9BT25-1</id>
        <name>1</name>
        <sequence type="displayed"/>
    </isoform>
    <isoform>
        <id>Q9BT25-2</id>
        <name>2</name>
        <sequence type="described" ref="VSP_031543"/>
    </isoform>
    <isoform>
        <id>Q9BT25-3</id>
        <name>3</name>
        <sequence type="described" ref="VSP_047167"/>
    </isoform>
</comment>
<comment type="similarity">
    <text evidence="8">Belongs to the HAUS8 family.</text>
</comment>
<comment type="sequence caution" evidence="8">
    <conflict type="erroneous initiation">
        <sequence resource="EMBL-CDS" id="AAH10176"/>
    </conflict>
    <text>Truncated N-terminus.</text>
</comment>
<comment type="sequence caution" evidence="8">
    <conflict type="erroneous initiation">
        <sequence resource="EMBL-CDS" id="AAO65172"/>
    </conflict>
    <text>Truncated N-terminus.</text>
</comment>
<comment type="sequence caution" evidence="8">
    <conflict type="frameshift">
        <sequence resource="EMBL-CDS" id="AAO65172"/>
    </conflict>
</comment>
<sequence length="410" mass="44857">MADSSGRGAGKPATGPTNSSSAKKKDKRVQGGRVIESRYLQYEKKTTQKAPAGDGSQTRGKMSEGGRKSSLLQKSKADSSGVGKGDLQSTLLEGHGTAPPDLDLSAINDKSIVKKTPQLAKTISKKPESTSFSAPRKKSPDLSEAMEMMESQTLLLTLLSVKMENNLAEFERRAEKNLLIMCKEKEKLQKKAHELKRRLLLSQRKRELADVLDAQIEMLSPFEAVATRFKEQYRTFATALDTTRHELPVRSIHLEGDGQQLLDALQHELVTTQRLLGELDVGDSEENVQVLDLLSELKDVTAKKDLELRRSFAQVLELSAEASKEAALANQEVWEETQGMAPPSRWYFNQDSACRESGGAPKNTPLSEDDNPGASSAPAQATFISPSEDFSSSSQAEVPPSLSRSGRDLS</sequence>
<evidence type="ECO:0000255" key="1"/>
<evidence type="ECO:0000256" key="2">
    <source>
        <dbReference type="SAM" id="MobiDB-lite"/>
    </source>
</evidence>
<evidence type="ECO:0000269" key="3">
    <source>
    </source>
</evidence>
<evidence type="ECO:0000269" key="4">
    <source>
    </source>
</evidence>
<evidence type="ECO:0000269" key="5">
    <source>
    </source>
</evidence>
<evidence type="ECO:0000269" key="6">
    <source>
    </source>
</evidence>
<evidence type="ECO:0000269" key="7">
    <source>
    </source>
</evidence>
<evidence type="ECO:0000305" key="8"/>
<evidence type="ECO:0000305" key="9">
    <source>
    </source>
</evidence>
<evidence type="ECO:0007744" key="10">
    <source>
    </source>
</evidence>
<evidence type="ECO:0007744" key="11">
    <source>
    </source>
</evidence>
<gene>
    <name type="primary">HAUS8</name>
    <name type="synonym">HICE1</name>
</gene>
<accession>Q9BT25</accession>
<accession>B4DJA7</accession>
<accession>C9JBZ4</accession>
<accession>Q49AC4</accession>
<accession>Q86WF0</accession>
<accession>Q96FX3</accession>
<reference key="1">
    <citation type="journal article" date="2008" name="Mol. Cell. Biol.">
        <title>Hice1, a novel microtubule-associated protein required for maintenance of spindle integrity and chromosomal stability in human cells.</title>
        <authorList>
            <person name="Wu G."/>
            <person name="Lin Y.-T."/>
            <person name="Wei R."/>
            <person name="Chen Y."/>
            <person name="Shan Z."/>
            <person name="Lee W.-H."/>
        </authorList>
    </citation>
    <scope>NUCLEOTIDE SEQUENCE [MRNA] (ISOFORM 1)</scope>
    <scope>FUNCTION</scope>
    <scope>SUBCELLULAR LOCATION</scope>
    <scope>VARIANT ARG-83</scope>
</reference>
<reference key="2">
    <citation type="journal article" date="2004" name="Nat. Genet.">
        <title>Complete sequencing and characterization of 21,243 full-length human cDNAs.</title>
        <authorList>
            <person name="Ota T."/>
            <person name="Suzuki Y."/>
            <person name="Nishikawa T."/>
            <person name="Otsuki T."/>
            <person name="Sugiyama T."/>
            <person name="Irie R."/>
            <person name="Wakamatsu A."/>
            <person name="Hayashi K."/>
            <person name="Sato H."/>
            <person name="Nagai K."/>
            <person name="Kimura K."/>
            <person name="Makita H."/>
            <person name="Sekine M."/>
            <person name="Obayashi M."/>
            <person name="Nishi T."/>
            <person name="Shibahara T."/>
            <person name="Tanaka T."/>
            <person name="Ishii S."/>
            <person name="Yamamoto J."/>
            <person name="Saito K."/>
            <person name="Kawai Y."/>
            <person name="Isono Y."/>
            <person name="Nakamura Y."/>
            <person name="Nagahari K."/>
            <person name="Murakami K."/>
            <person name="Yasuda T."/>
            <person name="Iwayanagi T."/>
            <person name="Wagatsuma M."/>
            <person name="Shiratori A."/>
            <person name="Sudo H."/>
            <person name="Hosoiri T."/>
            <person name="Kaku Y."/>
            <person name="Kodaira H."/>
            <person name="Kondo H."/>
            <person name="Sugawara M."/>
            <person name="Takahashi M."/>
            <person name="Kanda K."/>
            <person name="Yokoi T."/>
            <person name="Furuya T."/>
            <person name="Kikkawa E."/>
            <person name="Omura Y."/>
            <person name="Abe K."/>
            <person name="Kamihara K."/>
            <person name="Katsuta N."/>
            <person name="Sato K."/>
            <person name="Tanikawa M."/>
            <person name="Yamazaki M."/>
            <person name="Ninomiya K."/>
            <person name="Ishibashi T."/>
            <person name="Yamashita H."/>
            <person name="Murakawa K."/>
            <person name="Fujimori K."/>
            <person name="Tanai H."/>
            <person name="Kimata M."/>
            <person name="Watanabe M."/>
            <person name="Hiraoka S."/>
            <person name="Chiba Y."/>
            <person name="Ishida S."/>
            <person name="Ono Y."/>
            <person name="Takiguchi S."/>
            <person name="Watanabe S."/>
            <person name="Yosida M."/>
            <person name="Hotuta T."/>
            <person name="Kusano J."/>
            <person name="Kanehori K."/>
            <person name="Takahashi-Fujii A."/>
            <person name="Hara H."/>
            <person name="Tanase T.-O."/>
            <person name="Nomura Y."/>
            <person name="Togiya S."/>
            <person name="Komai F."/>
            <person name="Hara R."/>
            <person name="Takeuchi K."/>
            <person name="Arita M."/>
            <person name="Imose N."/>
            <person name="Musashino K."/>
            <person name="Yuuki H."/>
            <person name="Oshima A."/>
            <person name="Sasaki N."/>
            <person name="Aotsuka S."/>
            <person name="Yoshikawa Y."/>
            <person name="Matsunawa H."/>
            <person name="Ichihara T."/>
            <person name="Shiohata N."/>
            <person name="Sano S."/>
            <person name="Moriya S."/>
            <person name="Momiyama H."/>
            <person name="Satoh N."/>
            <person name="Takami S."/>
            <person name="Terashima Y."/>
            <person name="Suzuki O."/>
            <person name="Nakagawa S."/>
            <person name="Senoh A."/>
            <person name="Mizoguchi H."/>
            <person name="Goto Y."/>
            <person name="Shimizu F."/>
            <person name="Wakebe H."/>
            <person name="Hishigaki H."/>
            <person name="Watanabe T."/>
            <person name="Sugiyama A."/>
            <person name="Takemoto M."/>
            <person name="Kawakami B."/>
            <person name="Yamazaki M."/>
            <person name="Watanabe K."/>
            <person name="Kumagai A."/>
            <person name="Itakura S."/>
            <person name="Fukuzumi Y."/>
            <person name="Fujimori Y."/>
            <person name="Komiyama M."/>
            <person name="Tashiro H."/>
            <person name="Tanigami A."/>
            <person name="Fujiwara T."/>
            <person name="Ono T."/>
            <person name="Yamada K."/>
            <person name="Fujii Y."/>
            <person name="Ozaki K."/>
            <person name="Hirao M."/>
            <person name="Ohmori Y."/>
            <person name="Kawabata A."/>
            <person name="Hikiji T."/>
            <person name="Kobatake N."/>
            <person name="Inagaki H."/>
            <person name="Ikema Y."/>
            <person name="Okamoto S."/>
            <person name="Okitani R."/>
            <person name="Kawakami T."/>
            <person name="Noguchi S."/>
            <person name="Itoh T."/>
            <person name="Shigeta K."/>
            <person name="Senba T."/>
            <person name="Matsumura K."/>
            <person name="Nakajima Y."/>
            <person name="Mizuno T."/>
            <person name="Morinaga M."/>
            <person name="Sasaki M."/>
            <person name="Togashi T."/>
            <person name="Oyama M."/>
            <person name="Hata H."/>
            <person name="Watanabe M."/>
            <person name="Komatsu T."/>
            <person name="Mizushima-Sugano J."/>
            <person name="Satoh T."/>
            <person name="Shirai Y."/>
            <person name="Takahashi Y."/>
            <person name="Nakagawa K."/>
            <person name="Okumura K."/>
            <person name="Nagase T."/>
            <person name="Nomura N."/>
            <person name="Kikuchi H."/>
            <person name="Masuho Y."/>
            <person name="Yamashita R."/>
            <person name="Nakai K."/>
            <person name="Yada T."/>
            <person name="Nakamura Y."/>
            <person name="Ohara O."/>
            <person name="Isogai T."/>
            <person name="Sugano S."/>
        </authorList>
    </citation>
    <scope>NUCLEOTIDE SEQUENCE [LARGE SCALE MRNA] (ISOFORM 1)</scope>
    <source>
        <tissue>Subthalamic nucleus</tissue>
    </source>
</reference>
<reference key="3">
    <citation type="journal article" date="2004" name="Nature">
        <title>The DNA sequence and biology of human chromosome 19.</title>
        <authorList>
            <person name="Grimwood J."/>
            <person name="Gordon L.A."/>
            <person name="Olsen A.S."/>
            <person name="Terry A."/>
            <person name="Schmutz J."/>
            <person name="Lamerdin J.E."/>
            <person name="Hellsten U."/>
            <person name="Goodstein D."/>
            <person name="Couronne O."/>
            <person name="Tran-Gyamfi M."/>
            <person name="Aerts A."/>
            <person name="Altherr M."/>
            <person name="Ashworth L."/>
            <person name="Bajorek E."/>
            <person name="Black S."/>
            <person name="Branscomb E."/>
            <person name="Caenepeel S."/>
            <person name="Carrano A.V."/>
            <person name="Caoile C."/>
            <person name="Chan Y.M."/>
            <person name="Christensen M."/>
            <person name="Cleland C.A."/>
            <person name="Copeland A."/>
            <person name="Dalin E."/>
            <person name="Dehal P."/>
            <person name="Denys M."/>
            <person name="Detter J.C."/>
            <person name="Escobar J."/>
            <person name="Flowers D."/>
            <person name="Fotopulos D."/>
            <person name="Garcia C."/>
            <person name="Georgescu A.M."/>
            <person name="Glavina T."/>
            <person name="Gomez M."/>
            <person name="Gonzales E."/>
            <person name="Groza M."/>
            <person name="Hammon N."/>
            <person name="Hawkins T."/>
            <person name="Haydu L."/>
            <person name="Ho I."/>
            <person name="Huang W."/>
            <person name="Israni S."/>
            <person name="Jett J."/>
            <person name="Kadner K."/>
            <person name="Kimball H."/>
            <person name="Kobayashi A."/>
            <person name="Larionov V."/>
            <person name="Leem S.-H."/>
            <person name="Lopez F."/>
            <person name="Lou Y."/>
            <person name="Lowry S."/>
            <person name="Malfatti S."/>
            <person name="Martinez D."/>
            <person name="McCready P.M."/>
            <person name="Medina C."/>
            <person name="Morgan J."/>
            <person name="Nelson K."/>
            <person name="Nolan M."/>
            <person name="Ovcharenko I."/>
            <person name="Pitluck S."/>
            <person name="Pollard M."/>
            <person name="Popkie A.P."/>
            <person name="Predki P."/>
            <person name="Quan G."/>
            <person name="Ramirez L."/>
            <person name="Rash S."/>
            <person name="Retterer J."/>
            <person name="Rodriguez A."/>
            <person name="Rogers S."/>
            <person name="Salamov A."/>
            <person name="Salazar A."/>
            <person name="She X."/>
            <person name="Smith D."/>
            <person name="Slezak T."/>
            <person name="Solovyev V."/>
            <person name="Thayer N."/>
            <person name="Tice H."/>
            <person name="Tsai M."/>
            <person name="Ustaszewska A."/>
            <person name="Vo N."/>
            <person name="Wagner M."/>
            <person name="Wheeler J."/>
            <person name="Wu K."/>
            <person name="Xie G."/>
            <person name="Yang J."/>
            <person name="Dubchak I."/>
            <person name="Furey T.S."/>
            <person name="DeJong P."/>
            <person name="Dickson M."/>
            <person name="Gordon D."/>
            <person name="Eichler E.E."/>
            <person name="Pennacchio L.A."/>
            <person name="Richardson P."/>
            <person name="Stubbs L."/>
            <person name="Rokhsar D.S."/>
            <person name="Myers R.M."/>
            <person name="Rubin E.M."/>
            <person name="Lucas S.M."/>
        </authorList>
    </citation>
    <scope>NUCLEOTIDE SEQUENCE [LARGE SCALE GENOMIC DNA]</scope>
</reference>
<reference key="4">
    <citation type="submission" date="2005-07" db="EMBL/GenBank/DDBJ databases">
        <authorList>
            <person name="Mural R.J."/>
            <person name="Istrail S."/>
            <person name="Sutton G.G."/>
            <person name="Florea L."/>
            <person name="Halpern A.L."/>
            <person name="Mobarry C.M."/>
            <person name="Lippert R."/>
            <person name="Walenz B."/>
            <person name="Shatkay H."/>
            <person name="Dew I."/>
            <person name="Miller J.R."/>
            <person name="Flanigan M.J."/>
            <person name="Edwards N.J."/>
            <person name="Bolanos R."/>
            <person name="Fasulo D."/>
            <person name="Halldorsson B.V."/>
            <person name="Hannenhalli S."/>
            <person name="Turner R."/>
            <person name="Yooseph S."/>
            <person name="Lu F."/>
            <person name="Nusskern D.R."/>
            <person name="Shue B.C."/>
            <person name="Zheng X.H."/>
            <person name="Zhong F."/>
            <person name="Delcher A.L."/>
            <person name="Huson D.H."/>
            <person name="Kravitz S.A."/>
            <person name="Mouchard L."/>
            <person name="Reinert K."/>
            <person name="Remington K.A."/>
            <person name="Clark A.G."/>
            <person name="Waterman M.S."/>
            <person name="Eichler E.E."/>
            <person name="Adams M.D."/>
            <person name="Hunkapiller M.W."/>
            <person name="Myers E.W."/>
            <person name="Venter J.C."/>
        </authorList>
    </citation>
    <scope>NUCLEOTIDE SEQUENCE [LARGE SCALE GENOMIC DNA]</scope>
</reference>
<reference key="5">
    <citation type="journal article" date="2003" name="Proc. Natl. Acad. Sci. U.S.A.">
        <title>Immunomic analysis of human sarcoma.</title>
        <authorList>
            <person name="Lee S.-Y."/>
            <person name="Obata Y."/>
            <person name="Yoshida M."/>
            <person name="Stockert E."/>
            <person name="Williamson B."/>
            <person name="Jungbluth A.A."/>
            <person name="Chen Y.-T."/>
            <person name="Old L.J."/>
            <person name="Scanlan M.J."/>
        </authorList>
    </citation>
    <scope>NUCLEOTIDE SEQUENCE [MRNA] OF 1-283 (ISOFORM 1)</scope>
</reference>
<reference key="6">
    <citation type="journal article" date="2004" name="Genome Res.">
        <title>The status, quality, and expansion of the NIH full-length cDNA project: the Mammalian Gene Collection (MGC).</title>
        <authorList>
            <consortium name="The MGC Project Team"/>
        </authorList>
    </citation>
    <scope>NUCLEOTIDE SEQUENCE [LARGE SCALE MRNA] OF 2-410 (ISOFORM 1)</scope>
    <scope>NUCLEOTIDE SEQUENCE [LARGE SCALE MRNA] OF 152-410 (ISOFORMS 1/2)</scope>
    <scope>VARIANT ARG-83</scope>
    <source>
        <tissue>Eye</tissue>
        <tissue>Placenta</tissue>
    </source>
</reference>
<reference key="7">
    <citation type="journal article" date="2008" name="Mol. Cell">
        <title>Kinase-selective enrichment enables quantitative phosphoproteomics of the kinome across the cell cycle.</title>
        <authorList>
            <person name="Daub H."/>
            <person name="Olsen J.V."/>
            <person name="Bairlein M."/>
            <person name="Gnad F."/>
            <person name="Oppermann F.S."/>
            <person name="Korner R."/>
            <person name="Greff Z."/>
            <person name="Keri G."/>
            <person name="Stemmann O."/>
            <person name="Mann M."/>
        </authorList>
    </citation>
    <scope>PHOSPHORYLATION [LARGE SCALE ANALYSIS] AT SER-105</scope>
    <scope>IDENTIFICATION BY MASS SPECTROMETRY [LARGE SCALE ANALYSIS]</scope>
    <source>
        <tissue>Cervix carcinoma</tissue>
    </source>
</reference>
<reference key="8">
    <citation type="journal article" date="2009" name="Anal. Chem.">
        <title>Lys-N and trypsin cover complementary parts of the phosphoproteome in a refined SCX-based approach.</title>
        <authorList>
            <person name="Gauci S."/>
            <person name="Helbig A.O."/>
            <person name="Slijper M."/>
            <person name="Krijgsveld J."/>
            <person name="Heck A.J."/>
            <person name="Mohammed S."/>
        </authorList>
    </citation>
    <scope>ACETYLATION [LARGE SCALE ANALYSIS] AT ALA-2</scope>
    <scope>CLEAVAGE OF INITIATOR METHIONINE [LARGE SCALE ANALYSIS]</scope>
    <scope>IDENTIFICATION BY MASS SPECTROMETRY [LARGE SCALE ANALYSIS]</scope>
</reference>
<reference key="9">
    <citation type="journal article" date="2009" name="Curr. Biol.">
        <title>HAUS, the 8-subunit human augmin complex, regulates centrosome and spindle integrity.</title>
        <authorList>
            <person name="Lawo S."/>
            <person name="Bashkurov M."/>
            <person name="Mullin M."/>
            <person name="Ferreria M.G."/>
            <person name="Kittler R."/>
            <person name="Habermann B."/>
            <person name="Tagliaferro A."/>
            <person name="Poser I."/>
            <person name="Hutchins J.R.A."/>
            <person name="Hegemann B."/>
            <person name="Pinchev D."/>
            <person name="Buchholz F."/>
            <person name="Peters J.-M."/>
            <person name="Hyman A.A."/>
            <person name="Gingras A.-C."/>
            <person name="Pelletier L."/>
        </authorList>
    </citation>
    <scope>IDENTIFICATION IN THE HAUS AUGMIN-LIKE COMPLEX</scope>
    <scope>FUNCTION</scope>
    <scope>SUBCELLULAR LOCATION</scope>
</reference>
<reference key="10">
    <citation type="journal article" date="2009" name="Proc. Natl. Acad. Sci. U.S.A.">
        <title>The augmin complex plays a critical role in spindle microtubule generation for mitotic progression and cytokinesis in human cells.</title>
        <authorList>
            <person name="Uehara R."/>
            <person name="Nozawa R.-S."/>
            <person name="Tomioka A."/>
            <person name="Petry S."/>
            <person name="Vale R.D."/>
            <person name="Obuse C."/>
            <person name="Goshima G."/>
        </authorList>
    </citation>
    <scope>IDENTIFICATION IN THE HAUS AUGMIN-LIKE COMPLEX</scope>
    <scope>FUNCTION</scope>
    <scope>SUBCELLULAR LOCATION</scope>
</reference>
<reference key="11">
    <citation type="journal article" date="2011" name="BMC Syst. Biol.">
        <title>Initial characterization of the human central proteome.</title>
        <authorList>
            <person name="Burkard T.R."/>
            <person name="Planyavsky M."/>
            <person name="Kaupe I."/>
            <person name="Breitwieser F.P."/>
            <person name="Buerckstuemmer T."/>
            <person name="Bennett K.L."/>
            <person name="Superti-Furga G."/>
            <person name="Colinge J."/>
        </authorList>
    </citation>
    <scope>IDENTIFICATION BY MASS SPECTROMETRY [LARGE SCALE ANALYSIS]</scope>
</reference>
<reference key="12">
    <citation type="journal article" date="2019" name="J. Biol. Chem.">
        <title>The microtubule-associated protein EML3 regulates mitotic spindle assembly by recruiting the Augmin complex to spindle microtubules.</title>
        <authorList>
            <person name="Luo J."/>
            <person name="Yang B."/>
            <person name="Xin G."/>
            <person name="Sun M."/>
            <person name="Zhang B."/>
            <person name="Guo X."/>
            <person name="Jiang Q."/>
            <person name="Zhang C."/>
        </authorList>
    </citation>
    <scope>INTERACTION WITH EML3 AND TUBG1</scope>
    <scope>SUBCELLULAR LOCATION</scope>
</reference>
<dbReference type="EMBL" id="AK295994">
    <property type="protein sequence ID" value="BAG58769.1"/>
    <property type="molecule type" value="mRNA"/>
</dbReference>
<dbReference type="EMBL" id="AC020908">
    <property type="status" value="NOT_ANNOTATED_CDS"/>
    <property type="molecule type" value="Genomic_DNA"/>
</dbReference>
<dbReference type="EMBL" id="CH471106">
    <property type="protein sequence ID" value="EAW84570.1"/>
    <property type="molecule type" value="Genomic_DNA"/>
</dbReference>
<dbReference type="EMBL" id="CH471106">
    <property type="protein sequence ID" value="EAW84571.1"/>
    <property type="molecule type" value="Genomic_DNA"/>
</dbReference>
<dbReference type="EMBL" id="AY211919">
    <property type="protein sequence ID" value="AAO65172.1"/>
    <property type="status" value="ALT_SEQ"/>
    <property type="molecule type" value="mRNA"/>
</dbReference>
<dbReference type="EMBL" id="BC004398">
    <property type="protein sequence ID" value="AAH04398.1"/>
    <property type="molecule type" value="mRNA"/>
</dbReference>
<dbReference type="EMBL" id="BC010176">
    <property type="protein sequence ID" value="AAH10176.1"/>
    <property type="status" value="ALT_INIT"/>
    <property type="molecule type" value="mRNA"/>
</dbReference>
<dbReference type="CCDS" id="CCDS32948.1">
    <molecule id="Q9BT25-1"/>
</dbReference>
<dbReference type="CCDS" id="CCDS46009.1">
    <molecule id="Q9BT25-3"/>
</dbReference>
<dbReference type="RefSeq" id="NP_001011699.1">
    <molecule id="Q9BT25-3"/>
    <property type="nucleotide sequence ID" value="NM_001011699.1"/>
</dbReference>
<dbReference type="RefSeq" id="NP_219485.1">
    <molecule id="Q9BT25-1"/>
    <property type="nucleotide sequence ID" value="NM_033417.2"/>
</dbReference>
<dbReference type="PDB" id="7SQK">
    <property type="method" value="EM"/>
    <property type="resolution" value="8.00 A"/>
    <property type="chains" value="H=1-410"/>
</dbReference>
<dbReference type="PDBsum" id="7SQK"/>
<dbReference type="EMDB" id="EMD-25387"/>
<dbReference type="SMR" id="Q9BT25"/>
<dbReference type="BioGRID" id="125017">
    <property type="interactions" value="152"/>
</dbReference>
<dbReference type="ComplexPortal" id="CPX-1847">
    <property type="entry name" value="HAUS complex"/>
</dbReference>
<dbReference type="CORUM" id="Q9BT25"/>
<dbReference type="DIP" id="DIP-48834N"/>
<dbReference type="FunCoup" id="Q9BT25">
    <property type="interactions" value="1217"/>
</dbReference>
<dbReference type="IntAct" id="Q9BT25">
    <property type="interactions" value="109"/>
</dbReference>
<dbReference type="MINT" id="Q9BT25"/>
<dbReference type="STRING" id="9606.ENSP00000253669"/>
<dbReference type="GlyGen" id="Q9BT25">
    <property type="glycosylation" value="1 site, 1 O-linked glycan (1 site)"/>
</dbReference>
<dbReference type="iPTMnet" id="Q9BT25"/>
<dbReference type="PhosphoSitePlus" id="Q9BT25"/>
<dbReference type="BioMuta" id="HAUS8"/>
<dbReference type="DMDM" id="229462967"/>
<dbReference type="jPOST" id="Q9BT25"/>
<dbReference type="MassIVE" id="Q9BT25"/>
<dbReference type="PaxDb" id="9606-ENSP00000253669"/>
<dbReference type="PeptideAtlas" id="Q9BT25"/>
<dbReference type="ProteomicsDB" id="78945">
    <molecule id="Q9BT25-1"/>
</dbReference>
<dbReference type="ProteomicsDB" id="78946">
    <molecule id="Q9BT25-2"/>
</dbReference>
<dbReference type="ProteomicsDB" id="9526"/>
<dbReference type="Pumba" id="Q9BT25"/>
<dbReference type="Antibodypedia" id="27511">
    <property type="antibodies" value="194 antibodies from 25 providers"/>
</dbReference>
<dbReference type="DNASU" id="93323"/>
<dbReference type="Ensembl" id="ENST00000253669.10">
    <molecule id="Q9BT25-1"/>
    <property type="protein sequence ID" value="ENSP00000253669.4"/>
    <property type="gene ID" value="ENSG00000131351.15"/>
</dbReference>
<dbReference type="Ensembl" id="ENST00000448593.6">
    <molecule id="Q9BT25-3"/>
    <property type="protein sequence ID" value="ENSP00000395298.1"/>
    <property type="gene ID" value="ENSG00000131351.15"/>
</dbReference>
<dbReference type="Ensembl" id="ENST00000593360.1">
    <molecule id="Q9BT25-2"/>
    <property type="protein sequence ID" value="ENSP00000470829.1"/>
    <property type="gene ID" value="ENSG00000131351.15"/>
</dbReference>
<dbReference type="GeneID" id="93323"/>
<dbReference type="KEGG" id="hsa:93323"/>
<dbReference type="MANE-Select" id="ENST00000253669.10">
    <property type="protein sequence ID" value="ENSP00000253669.4"/>
    <property type="RefSeq nucleotide sequence ID" value="NM_033417.2"/>
    <property type="RefSeq protein sequence ID" value="NP_219485.1"/>
</dbReference>
<dbReference type="UCSC" id="uc002nfe.4">
    <molecule id="Q9BT25-1"/>
    <property type="organism name" value="human"/>
</dbReference>
<dbReference type="AGR" id="HGNC:30532"/>
<dbReference type="CTD" id="93323"/>
<dbReference type="DisGeNET" id="93323"/>
<dbReference type="GeneCards" id="HAUS8"/>
<dbReference type="HGNC" id="HGNC:30532">
    <property type="gene designation" value="HAUS8"/>
</dbReference>
<dbReference type="HPA" id="ENSG00000131351">
    <property type="expression patterns" value="Low tissue specificity"/>
</dbReference>
<dbReference type="MIM" id="613434">
    <property type="type" value="gene"/>
</dbReference>
<dbReference type="neXtProt" id="NX_Q9BT25"/>
<dbReference type="OpenTargets" id="ENSG00000131351"/>
<dbReference type="PharmGKB" id="PA165393466"/>
<dbReference type="VEuPathDB" id="HostDB:ENSG00000131351"/>
<dbReference type="eggNOG" id="ENOG502S04A">
    <property type="taxonomic scope" value="Eukaryota"/>
</dbReference>
<dbReference type="GeneTree" id="ENSGT00390000010974"/>
<dbReference type="HOGENOM" id="CLU_060977_0_0_1"/>
<dbReference type="InParanoid" id="Q9BT25"/>
<dbReference type="OMA" id="TAKMEHN"/>
<dbReference type="OrthoDB" id="10050218at2759"/>
<dbReference type="PAN-GO" id="Q9BT25">
    <property type="GO annotations" value="6 GO annotations based on evolutionary models"/>
</dbReference>
<dbReference type="PhylomeDB" id="Q9BT25"/>
<dbReference type="TreeFam" id="TF332998"/>
<dbReference type="PathwayCommons" id="Q9BT25"/>
<dbReference type="Reactome" id="R-HSA-2565942">
    <property type="pathway name" value="Regulation of PLK1 Activity at G2/M Transition"/>
</dbReference>
<dbReference type="Reactome" id="R-HSA-380259">
    <property type="pathway name" value="Loss of Nlp from mitotic centrosomes"/>
</dbReference>
<dbReference type="Reactome" id="R-HSA-380270">
    <property type="pathway name" value="Recruitment of mitotic centrosome proteins and complexes"/>
</dbReference>
<dbReference type="Reactome" id="R-HSA-380284">
    <property type="pathway name" value="Loss of proteins required for interphase microtubule organization from the centrosome"/>
</dbReference>
<dbReference type="Reactome" id="R-HSA-380320">
    <property type="pathway name" value="Recruitment of NuMA to mitotic centrosomes"/>
</dbReference>
<dbReference type="Reactome" id="R-HSA-5620912">
    <property type="pathway name" value="Anchoring of the basal body to the plasma membrane"/>
</dbReference>
<dbReference type="Reactome" id="R-HSA-8854518">
    <property type="pathway name" value="AURKA Activation by TPX2"/>
</dbReference>
<dbReference type="SignaLink" id="Q9BT25"/>
<dbReference type="SIGNOR" id="Q9BT25"/>
<dbReference type="BioGRID-ORCS" id="93323">
    <property type="hits" value="690 hits in 1173 CRISPR screens"/>
</dbReference>
<dbReference type="CD-CODE" id="8C2F96ED">
    <property type="entry name" value="Centrosome"/>
</dbReference>
<dbReference type="ChiTaRS" id="HAUS8">
    <property type="organism name" value="human"/>
</dbReference>
<dbReference type="GenomeRNAi" id="93323"/>
<dbReference type="Pharos" id="Q9BT25">
    <property type="development level" value="Tbio"/>
</dbReference>
<dbReference type="PRO" id="PR:Q9BT25"/>
<dbReference type="Proteomes" id="UP000005640">
    <property type="component" value="Chromosome 19"/>
</dbReference>
<dbReference type="RNAct" id="Q9BT25">
    <property type="molecule type" value="protein"/>
</dbReference>
<dbReference type="Bgee" id="ENSG00000131351">
    <property type="expression patterns" value="Expressed in primordial germ cell in gonad and 104 other cell types or tissues"/>
</dbReference>
<dbReference type="ExpressionAtlas" id="Q9BT25">
    <property type="expression patterns" value="baseline and differential"/>
</dbReference>
<dbReference type="GO" id="GO:0005813">
    <property type="term" value="C:centrosome"/>
    <property type="evidence" value="ECO:0000314"/>
    <property type="project" value="UniProtKB"/>
</dbReference>
<dbReference type="GO" id="GO:0005737">
    <property type="term" value="C:cytoplasm"/>
    <property type="evidence" value="ECO:0000318"/>
    <property type="project" value="GO_Central"/>
</dbReference>
<dbReference type="GO" id="GO:0005829">
    <property type="term" value="C:cytosol"/>
    <property type="evidence" value="ECO:0000304"/>
    <property type="project" value="Reactome"/>
</dbReference>
<dbReference type="GO" id="GO:0070652">
    <property type="term" value="C:HAUS complex"/>
    <property type="evidence" value="ECO:0000314"/>
    <property type="project" value="UniProtKB"/>
</dbReference>
<dbReference type="GO" id="GO:1990498">
    <property type="term" value="C:mitotic spindle microtubule"/>
    <property type="evidence" value="ECO:0000314"/>
    <property type="project" value="UniProtKB"/>
</dbReference>
<dbReference type="GO" id="GO:0005880">
    <property type="term" value="C:nuclear microtubule"/>
    <property type="evidence" value="ECO:0000318"/>
    <property type="project" value="GO_Central"/>
</dbReference>
<dbReference type="GO" id="GO:0000922">
    <property type="term" value="C:spindle pole"/>
    <property type="evidence" value="ECO:0007669"/>
    <property type="project" value="UniProtKB-SubCell"/>
</dbReference>
<dbReference type="GO" id="GO:0008017">
    <property type="term" value="F:microtubule binding"/>
    <property type="evidence" value="ECO:0000318"/>
    <property type="project" value="GO_Central"/>
</dbReference>
<dbReference type="GO" id="GO:0051301">
    <property type="term" value="P:cell division"/>
    <property type="evidence" value="ECO:0007669"/>
    <property type="project" value="UniProtKB-KW"/>
</dbReference>
<dbReference type="GO" id="GO:0007098">
    <property type="term" value="P:centrosome cycle"/>
    <property type="evidence" value="ECO:0000315"/>
    <property type="project" value="UniProtKB"/>
</dbReference>
<dbReference type="GO" id="GO:0010968">
    <property type="term" value="P:regulation of microtubule nucleation"/>
    <property type="evidence" value="ECO:0000303"/>
    <property type="project" value="ComplexPortal"/>
</dbReference>
<dbReference type="GO" id="GO:0051225">
    <property type="term" value="P:spindle assembly"/>
    <property type="evidence" value="ECO:0000315"/>
    <property type="project" value="UniProtKB"/>
</dbReference>
<dbReference type="PANTHER" id="PTHR31807">
    <property type="entry name" value="AUGMIN FAMILY MEMBER"/>
    <property type="match status" value="1"/>
</dbReference>
<dbReference type="PANTHER" id="PTHR31807:SF37">
    <property type="entry name" value="HAUS AUGMIN-LIKE COMPLEX SUBUNIT 8"/>
    <property type="match status" value="1"/>
</dbReference>
<keyword id="KW-0002">3D-structure</keyword>
<keyword id="KW-0007">Acetylation</keyword>
<keyword id="KW-0025">Alternative splicing</keyword>
<keyword id="KW-0131">Cell cycle</keyword>
<keyword id="KW-0132">Cell division</keyword>
<keyword id="KW-0175">Coiled coil</keyword>
<keyword id="KW-0963">Cytoplasm</keyword>
<keyword id="KW-0206">Cytoskeleton</keyword>
<keyword id="KW-0493">Microtubule</keyword>
<keyword id="KW-0498">Mitosis</keyword>
<keyword id="KW-0597">Phosphoprotein</keyword>
<keyword id="KW-1267">Proteomics identification</keyword>
<keyword id="KW-1185">Reference proteome</keyword>